<dbReference type="EMBL" id="M81190">
    <property type="protein sequence ID" value="AAA30782.1"/>
    <property type="molecule type" value="mRNA"/>
</dbReference>
<dbReference type="EMBL" id="M81190">
    <property type="protein sequence ID" value="AAA30783.1"/>
    <property type="molecule type" value="mRNA"/>
</dbReference>
<dbReference type="PIR" id="A41799">
    <property type="entry name" value="IJBODC"/>
</dbReference>
<dbReference type="PIR" id="B41799">
    <property type="entry name" value="IJBODD"/>
</dbReference>
<dbReference type="SMR" id="P33545"/>
<dbReference type="FunCoup" id="P33545">
    <property type="interactions" value="217"/>
</dbReference>
<dbReference type="STRING" id="9913.ENSBTAP00000011306"/>
<dbReference type="GlyCosmos" id="P33545">
    <property type="glycosylation" value="4 sites, No reported glycans"/>
</dbReference>
<dbReference type="GlyGen" id="P33545">
    <property type="glycosylation" value="4 sites"/>
</dbReference>
<dbReference type="PaxDb" id="9913-ENSBTAP00000011306"/>
<dbReference type="eggNOG" id="KOG3594">
    <property type="taxonomic scope" value="Eukaryota"/>
</dbReference>
<dbReference type="InParanoid" id="P33545"/>
<dbReference type="OrthoDB" id="6079678at2759"/>
<dbReference type="Proteomes" id="UP000009136">
    <property type="component" value="Unplaced"/>
</dbReference>
<dbReference type="GO" id="GO:0030057">
    <property type="term" value="C:desmosome"/>
    <property type="evidence" value="ECO:0000318"/>
    <property type="project" value="GO_Central"/>
</dbReference>
<dbReference type="GO" id="GO:0005886">
    <property type="term" value="C:plasma membrane"/>
    <property type="evidence" value="ECO:0007669"/>
    <property type="project" value="UniProtKB-SubCell"/>
</dbReference>
<dbReference type="GO" id="GO:0005509">
    <property type="term" value="F:calcium ion binding"/>
    <property type="evidence" value="ECO:0000318"/>
    <property type="project" value="GO_Central"/>
</dbReference>
<dbReference type="GO" id="GO:0098609">
    <property type="term" value="P:cell-cell adhesion"/>
    <property type="evidence" value="ECO:0000318"/>
    <property type="project" value="GO_Central"/>
</dbReference>
<dbReference type="GO" id="GO:0007156">
    <property type="term" value="P:homophilic cell adhesion via plasma membrane adhesion molecules"/>
    <property type="evidence" value="ECO:0007669"/>
    <property type="project" value="InterPro"/>
</dbReference>
<dbReference type="CDD" id="cd11304">
    <property type="entry name" value="Cadherin_repeat"/>
    <property type="match status" value="4"/>
</dbReference>
<dbReference type="FunFam" id="2.60.40.60:FF:000011">
    <property type="entry name" value="Cadherin 1"/>
    <property type="match status" value="1"/>
</dbReference>
<dbReference type="FunFam" id="2.60.40.60:FF:000019">
    <property type="entry name" value="Cadherin 2"/>
    <property type="match status" value="1"/>
</dbReference>
<dbReference type="FunFam" id="2.60.40.60:FF:000027">
    <property type="entry name" value="Cadherin 2"/>
    <property type="match status" value="1"/>
</dbReference>
<dbReference type="FunFam" id="2.60.40.60:FF:000031">
    <property type="entry name" value="Cadherin 3"/>
    <property type="match status" value="1"/>
</dbReference>
<dbReference type="FunFam" id="2.60.40.60:FF:000091">
    <property type="entry name" value="Desmocollin 1"/>
    <property type="match status" value="1"/>
</dbReference>
<dbReference type="FunFam" id="2.60.40.60:FF:000096">
    <property type="entry name" value="Desmocollin 2"/>
    <property type="match status" value="1"/>
</dbReference>
<dbReference type="FunFam" id="4.10.900.10:FF:000005">
    <property type="entry name" value="Desmocollin 2"/>
    <property type="match status" value="1"/>
</dbReference>
<dbReference type="Gene3D" id="2.60.40.60">
    <property type="entry name" value="Cadherins"/>
    <property type="match status" value="6"/>
</dbReference>
<dbReference type="Gene3D" id="4.10.900.10">
    <property type="entry name" value="TCF3-CBD (Catenin binding domain)"/>
    <property type="match status" value="1"/>
</dbReference>
<dbReference type="InterPro" id="IPR050971">
    <property type="entry name" value="Cadherin-domain_protein"/>
</dbReference>
<dbReference type="InterPro" id="IPR002126">
    <property type="entry name" value="Cadherin-like_dom"/>
</dbReference>
<dbReference type="InterPro" id="IPR015919">
    <property type="entry name" value="Cadherin-like_sf"/>
</dbReference>
<dbReference type="InterPro" id="IPR020894">
    <property type="entry name" value="Cadherin_CS"/>
</dbReference>
<dbReference type="InterPro" id="IPR014868">
    <property type="entry name" value="Cadherin_pro_dom"/>
</dbReference>
<dbReference type="InterPro" id="IPR000233">
    <property type="entry name" value="Cadherin_Y-type_LIR"/>
</dbReference>
<dbReference type="InterPro" id="IPR027397">
    <property type="entry name" value="Catenin-bd_sf"/>
</dbReference>
<dbReference type="InterPro" id="IPR009122">
    <property type="entry name" value="Desmosomal_cadherin"/>
</dbReference>
<dbReference type="PANTHER" id="PTHR24025:SF0">
    <property type="entry name" value="DESMOCOLLIN-2"/>
    <property type="match status" value="1"/>
</dbReference>
<dbReference type="PANTHER" id="PTHR24025">
    <property type="entry name" value="DESMOGLEIN FAMILY MEMBER"/>
    <property type="match status" value="1"/>
</dbReference>
<dbReference type="Pfam" id="PF01049">
    <property type="entry name" value="CADH_Y-type_LIR"/>
    <property type="match status" value="1"/>
</dbReference>
<dbReference type="Pfam" id="PF00028">
    <property type="entry name" value="Cadherin"/>
    <property type="match status" value="4"/>
</dbReference>
<dbReference type="Pfam" id="PF08758">
    <property type="entry name" value="Cadherin_pro"/>
    <property type="match status" value="1"/>
</dbReference>
<dbReference type="PRINTS" id="PR00205">
    <property type="entry name" value="CADHERIN"/>
</dbReference>
<dbReference type="PRINTS" id="PR01818">
    <property type="entry name" value="DESMOCADHERN"/>
</dbReference>
<dbReference type="PRINTS" id="PR01820">
    <property type="entry name" value="DESMOCOLLIN"/>
</dbReference>
<dbReference type="SMART" id="SM00112">
    <property type="entry name" value="CA"/>
    <property type="match status" value="5"/>
</dbReference>
<dbReference type="SMART" id="SM01055">
    <property type="entry name" value="Cadherin_pro"/>
    <property type="match status" value="1"/>
</dbReference>
<dbReference type="SUPFAM" id="SSF49313">
    <property type="entry name" value="Cadherin-like"/>
    <property type="match status" value="6"/>
</dbReference>
<dbReference type="PROSITE" id="PS00232">
    <property type="entry name" value="CADHERIN_1"/>
    <property type="match status" value="3"/>
</dbReference>
<dbReference type="PROSITE" id="PS50268">
    <property type="entry name" value="CADHERIN_2"/>
    <property type="match status" value="5"/>
</dbReference>
<sequence length="863" mass="95875">KFIGRVNLKECFKSATLIHSSDPDFQILEDGSVYTTHAILLSSEKSSFTILLSNTETQEEKEILVLLEHQTKVLKKRHSQEKVLRRAKRRWAPIPCSVPENSLGPFPLFLQQIQSDTAQNYTIYYSISGPGVDKEPRNLFYVERDTGNLFCTASIDRETYPLFELVAFATTPDGYTPEYPLTLVIRIEDENDNAPIFTETSYSFEVFENSKVGTTVGQVCATDQDEPDTLHTRLKYSIIEQFPALPTLFSMHPTTGVITTSSSKLDRELIDKYQLKIKVQDMDGQYFGLQTTAICIINIEDVNDNLPTFTRSSYVASVEENRIDVEILRVAVRDKDLINTANWRANYTILKGNEDGNFKIVTDSQTNEGVLCVVKPLNYEEKQQVTLEIGVVNEAPYTGTSRSTTNMATVTVNVQNQDEGPECDPRVQTVRIKENVPVGTKTIGYKAYDPETGSSSGIRYKKSSDPEGWVDVDKNSGVITILKRLDREARSGVYNISIIASDKDGRTCNGVLGIVLEDVNDNGPVIPQRTVVICKTVMSSAEIVAVDPDEPIHGPPFDFSLEGVSDSEVLRMWRLTKVNDTAARLSYLNDLRFGKYTVPVRVTDRLGQSLVTQLVVILCDCVTPNDCSFRPVSRTGNREVILGKWAILAILLGIALLFCILFTLVCGATTGADKKPKVFPDDLAQQNLIVSNTEAPGDDKVYSTNDFTTHAVGGSAHGIGGTLGSRVKNGGQETIEMVKGGHQTMESCQETGHDHTLERCKEGGQHTLDSCRGGPVATDNCKYTYSEWYTYTQPRLGEKVQQCDQDNTHMQAQDYVLTYNYEGRGSAAGSVGCCSERQEEDGLEFLDHLGPKFRTLAETCMKR</sequence>
<accession>P33545</accession>
<keyword id="KW-0025">Alternative splicing</keyword>
<keyword id="KW-0106">Calcium</keyword>
<keyword id="KW-0130">Cell adhesion</keyword>
<keyword id="KW-0965">Cell junction</keyword>
<keyword id="KW-1003">Cell membrane</keyword>
<keyword id="KW-0165">Cleavage on pair of basic residues</keyword>
<keyword id="KW-0325">Glycoprotein</keyword>
<keyword id="KW-0472">Membrane</keyword>
<keyword id="KW-0479">Metal-binding</keyword>
<keyword id="KW-0597">Phosphoprotein</keyword>
<keyword id="KW-1185">Reference proteome</keyword>
<keyword id="KW-0677">Repeat</keyword>
<keyword id="KW-0812">Transmembrane</keyword>
<keyword id="KW-1133">Transmembrane helix</keyword>
<gene>
    <name type="primary">DSC2</name>
</gene>
<proteinExistence type="evidence at transcript level"/>
<name>DSC2_BOVIN</name>
<protein>
    <recommendedName>
        <fullName>Desmocollin-2</fullName>
    </recommendedName>
    <alternativeName>
        <fullName>Epithelial type 2 desmocollin</fullName>
    </alternativeName>
</protein>
<comment type="function">
    <text evidence="2 3">A component of desmosome cell-cell junctions which are required for positive regulation of cellular adhesion (By similarity). Promotes timely incorporation of DSG2 into desmosome intercellular junctions and promotes interaction of desmosome cell junctions with intermediate filament cytokeratin, via modulation of DSP phosphorylation (By similarity). Plays an important role in desmosome-mediated maintenance of intestinal epithelial cell intercellular adhesion strength and barrier function (By similarity). Positively regulates wound healing of intestinal mucosa via promotion of epithelial cell migration, and also plays a role in mechanotransduction of force between intestinal epithelial cells and extracellular matrix (By similarity). May contribute to epidermal cell positioning (stratification) by mediating differential adhesiveness between cells that express different isoforms.</text>
</comment>
<comment type="subunit">
    <text evidence="2 3">Interacts with DSP, PKP2 and JUP (By similarity). Interacts with DSG3; the interaction may limit the interaction of DSC3 with p38MAPK family members and therefore repress p38MAPK signaling activation (By similarity).</text>
</comment>
<comment type="subcellular location">
    <subcellularLocation>
        <location evidence="3">Cell membrane</location>
        <topology evidence="3">Single-pass type I membrane protein</topology>
    </subcellularLocation>
    <subcellularLocation>
        <location evidence="3">Cell junction</location>
        <location evidence="3">Desmosome</location>
    </subcellularLocation>
</comment>
<comment type="alternative products">
    <event type="alternative splicing"/>
    <isoform>
        <id>P33545-1</id>
        <name>2A</name>
        <sequence type="displayed"/>
    </isoform>
    <isoform>
        <id>P33545-2</id>
        <name>2B</name>
        <sequence type="described" ref="VSP_000655 VSP_000656"/>
    </isoform>
</comment>
<comment type="tissue specificity">
    <text evidence="6">Expressed in esophagus and rumen (PubMed:1729705). Weakly expressed in epithelia and cardiac muscle (PubMed:1729705).</text>
</comment>
<comment type="domain">
    <text evidence="8">Calcium may be bound by the cadherin-like repeats.</text>
</comment>
<comment type="domain">
    <text evidence="1">Three calcium ions are usually bound at the interface of each cadherin domain and rigidify the connections, imparting a strong curvature to the full-length ectodomain.</text>
</comment>
<organism>
    <name type="scientific">Bos taurus</name>
    <name type="common">Bovine</name>
    <dbReference type="NCBI Taxonomy" id="9913"/>
    <lineage>
        <taxon>Eukaryota</taxon>
        <taxon>Metazoa</taxon>
        <taxon>Chordata</taxon>
        <taxon>Craniata</taxon>
        <taxon>Vertebrata</taxon>
        <taxon>Euteleostomi</taxon>
        <taxon>Mammalia</taxon>
        <taxon>Eutheria</taxon>
        <taxon>Laurasiatheria</taxon>
        <taxon>Artiodactyla</taxon>
        <taxon>Ruminantia</taxon>
        <taxon>Pecora</taxon>
        <taxon>Bovidae</taxon>
        <taxon>Bovinae</taxon>
        <taxon>Bos</taxon>
    </lineage>
</organism>
<reference key="1">
    <citation type="journal article" date="1992" name="Proc. Natl. Acad. Sci. U.S.A.">
        <title>Complexity and expression patterns of the desmosomal cadherins.</title>
        <authorList>
            <person name="Koch P.J."/>
            <person name="Goldschmidt M.D."/>
            <person name="Zimbelmann R."/>
            <person name="Troyanovsky R."/>
            <person name="Franke W.W."/>
        </authorList>
    </citation>
    <scope>NUCLEOTIDE SEQUENCE [MRNA] (ISOFORMS 2A AND 2B)</scope>
    <scope>TISSUE SPECIFICITY</scope>
    <source>
        <tissue>Muzzle epithelium</tissue>
    </source>
</reference>
<feature type="propeptide" id="PRO_0000003867" evidence="4">
    <location>
        <begin position="1"/>
        <end position="89"/>
    </location>
</feature>
<feature type="chain" id="PRO_0000003868" description="Desmocollin-2">
    <location>
        <begin position="90"/>
        <end position="863"/>
    </location>
</feature>
<feature type="topological domain" description="Extracellular" evidence="4">
    <location>
        <begin position="90"/>
        <end position="644"/>
    </location>
</feature>
<feature type="transmembrane region" description="Helical" evidence="4">
    <location>
        <begin position="645"/>
        <end position="665"/>
    </location>
</feature>
<feature type="topological domain" description="Cytoplasmic" evidence="4">
    <location>
        <begin position="666"/>
        <end position="863"/>
    </location>
</feature>
<feature type="domain" description="Cadherin 1" evidence="5">
    <location>
        <begin position="90"/>
        <end position="197"/>
    </location>
</feature>
<feature type="domain" description="Cadherin 2" evidence="5">
    <location>
        <begin position="198"/>
        <end position="309"/>
    </location>
</feature>
<feature type="domain" description="Cadherin 3" evidence="5">
    <location>
        <begin position="310"/>
        <end position="423"/>
    </location>
</feature>
<feature type="domain" description="Cadherin 4" evidence="5">
    <location>
        <begin position="424"/>
        <end position="528"/>
    </location>
</feature>
<feature type="domain" description="Cadherin 5" evidence="5">
    <location>
        <begin position="529"/>
        <end position="644"/>
    </location>
</feature>
<feature type="modified residue" description="Phosphoserine" evidence="3">
    <location>
        <position position="826"/>
    </location>
</feature>
<feature type="modified residue" description="Phosphoserine" evidence="3">
    <location>
        <position position="830"/>
    </location>
</feature>
<feature type="modified residue" description="Phosphoserine" evidence="3">
    <location>
        <position position="835"/>
    </location>
</feature>
<feature type="glycosylation site" description="N-linked (GlcNAc...) asparagine" evidence="4">
    <location>
        <position position="120"/>
    </location>
</feature>
<feature type="glycosylation site" description="N-linked (GlcNAc...) asparagine" evidence="4">
    <location>
        <position position="346"/>
    </location>
</feature>
<feature type="glycosylation site" description="N-linked (GlcNAc...) asparagine" evidence="4">
    <location>
        <position position="495"/>
    </location>
</feature>
<feature type="glycosylation site" description="N-linked (GlcNAc...) asparagine" evidence="4">
    <location>
        <position position="579"/>
    </location>
</feature>
<feature type="splice variant" id="VSP_000655" description="In isoform 2B." evidence="7">
    <original>KVQQCDQDNTH</original>
    <variation>ESIRGHTLVKN</variation>
    <location>
        <begin position="799"/>
        <end position="809"/>
    </location>
</feature>
<feature type="splice variant" id="VSP_000656" description="In isoform 2B." evidence="7">
    <location>
        <begin position="810"/>
        <end position="863"/>
    </location>
</feature>
<feature type="sequence variant">
    <original>K</original>
    <variation>Q</variation>
    <location>
        <position position="264"/>
    </location>
</feature>
<feature type="sequence variant">
    <original>R</original>
    <variation>Q</variation>
    <location>
        <position position="333"/>
    </location>
</feature>
<feature type="non-terminal residue">
    <location>
        <position position="1"/>
    </location>
</feature>
<evidence type="ECO:0000250" key="1"/>
<evidence type="ECO:0000250" key="2">
    <source>
        <dbReference type="UniProtKB" id="P55292"/>
    </source>
</evidence>
<evidence type="ECO:0000250" key="3">
    <source>
        <dbReference type="UniProtKB" id="Q02487"/>
    </source>
</evidence>
<evidence type="ECO:0000255" key="4"/>
<evidence type="ECO:0000255" key="5">
    <source>
        <dbReference type="PROSITE-ProRule" id="PRU00043"/>
    </source>
</evidence>
<evidence type="ECO:0000269" key="6">
    <source>
    </source>
</evidence>
<evidence type="ECO:0000303" key="7">
    <source>
    </source>
</evidence>
<evidence type="ECO:0000305" key="8"/>